<reference key="1">
    <citation type="journal article" date="2007" name="Appl. Environ. Microbiol.">
        <title>Genome sequence of the cellulolytic gliding bacterium Cytophaga hutchinsonii.</title>
        <authorList>
            <person name="Xie G."/>
            <person name="Bruce D.C."/>
            <person name="Challacombe J.F."/>
            <person name="Chertkov O."/>
            <person name="Detter J.C."/>
            <person name="Gilna P."/>
            <person name="Han C.S."/>
            <person name="Lucas S."/>
            <person name="Misra M."/>
            <person name="Myers G.L."/>
            <person name="Richardson P."/>
            <person name="Tapia R."/>
            <person name="Thayer N."/>
            <person name="Thompson L.S."/>
            <person name="Brettin T.S."/>
            <person name="Henrissat B."/>
            <person name="Wilson D.B."/>
            <person name="McBride M.J."/>
        </authorList>
    </citation>
    <scope>NUCLEOTIDE SEQUENCE [LARGE SCALE GENOMIC DNA]</scope>
    <source>
        <strain>ATCC 33406 / DSM 1761 / JCM 20678 / CIP 103989 / IAM 12607 / NBRC 15051 / NCIMB 9469 / D465</strain>
    </source>
</reference>
<evidence type="ECO:0000255" key="1">
    <source>
        <dbReference type="HAMAP-Rule" id="MF_01365"/>
    </source>
</evidence>
<evidence type="ECO:0000305" key="2"/>
<gene>
    <name evidence="1" type="primary">rplF</name>
    <name type="ordered locus">CHU_3147</name>
</gene>
<comment type="function">
    <text evidence="1">This protein binds to the 23S rRNA, and is important in its secondary structure. It is located near the subunit interface in the base of the L7/L12 stalk, and near the tRNA binding site of the peptidyltransferase center.</text>
</comment>
<comment type="subunit">
    <text evidence="1">Part of the 50S ribosomal subunit.</text>
</comment>
<comment type="similarity">
    <text evidence="1">Belongs to the universal ribosomal protein uL6 family.</text>
</comment>
<keyword id="KW-1185">Reference proteome</keyword>
<keyword id="KW-0687">Ribonucleoprotein</keyword>
<keyword id="KW-0689">Ribosomal protein</keyword>
<keyword id="KW-0694">RNA-binding</keyword>
<keyword id="KW-0699">rRNA-binding</keyword>
<accession>Q11QC7</accession>
<name>RL6_CYTH3</name>
<dbReference type="EMBL" id="CP000383">
    <property type="protein sequence ID" value="ABG60387.1"/>
    <property type="molecule type" value="Genomic_DNA"/>
</dbReference>
<dbReference type="RefSeq" id="WP_011586496.1">
    <property type="nucleotide sequence ID" value="NC_008255.1"/>
</dbReference>
<dbReference type="SMR" id="Q11QC7"/>
<dbReference type="STRING" id="269798.CHU_3147"/>
<dbReference type="KEGG" id="chu:CHU_3147"/>
<dbReference type="eggNOG" id="COG0097">
    <property type="taxonomic scope" value="Bacteria"/>
</dbReference>
<dbReference type="HOGENOM" id="CLU_065464_1_2_10"/>
<dbReference type="OrthoDB" id="9805007at2"/>
<dbReference type="Proteomes" id="UP000001822">
    <property type="component" value="Chromosome"/>
</dbReference>
<dbReference type="GO" id="GO:0022625">
    <property type="term" value="C:cytosolic large ribosomal subunit"/>
    <property type="evidence" value="ECO:0007669"/>
    <property type="project" value="TreeGrafter"/>
</dbReference>
<dbReference type="GO" id="GO:0019843">
    <property type="term" value="F:rRNA binding"/>
    <property type="evidence" value="ECO:0007669"/>
    <property type="project" value="UniProtKB-UniRule"/>
</dbReference>
<dbReference type="GO" id="GO:0003735">
    <property type="term" value="F:structural constituent of ribosome"/>
    <property type="evidence" value="ECO:0007669"/>
    <property type="project" value="InterPro"/>
</dbReference>
<dbReference type="GO" id="GO:0002181">
    <property type="term" value="P:cytoplasmic translation"/>
    <property type="evidence" value="ECO:0007669"/>
    <property type="project" value="TreeGrafter"/>
</dbReference>
<dbReference type="FunFam" id="3.90.930.12:FF:000002">
    <property type="entry name" value="50S ribosomal protein L6"/>
    <property type="match status" value="1"/>
</dbReference>
<dbReference type="Gene3D" id="3.90.930.12">
    <property type="entry name" value="Ribosomal protein L6, alpha-beta domain"/>
    <property type="match status" value="2"/>
</dbReference>
<dbReference type="HAMAP" id="MF_01365_B">
    <property type="entry name" value="Ribosomal_uL6_B"/>
    <property type="match status" value="1"/>
</dbReference>
<dbReference type="InterPro" id="IPR000702">
    <property type="entry name" value="Ribosomal_uL6-like"/>
</dbReference>
<dbReference type="InterPro" id="IPR036789">
    <property type="entry name" value="Ribosomal_uL6-like_a/b-dom_sf"/>
</dbReference>
<dbReference type="InterPro" id="IPR020040">
    <property type="entry name" value="Ribosomal_uL6_a/b-dom"/>
</dbReference>
<dbReference type="InterPro" id="IPR019906">
    <property type="entry name" value="Ribosomal_uL6_bac-type"/>
</dbReference>
<dbReference type="NCBIfam" id="TIGR03654">
    <property type="entry name" value="L6_bact"/>
    <property type="match status" value="1"/>
</dbReference>
<dbReference type="PANTHER" id="PTHR11655">
    <property type="entry name" value="60S/50S RIBOSOMAL PROTEIN L6/L9"/>
    <property type="match status" value="1"/>
</dbReference>
<dbReference type="PANTHER" id="PTHR11655:SF14">
    <property type="entry name" value="LARGE RIBOSOMAL SUBUNIT PROTEIN UL6M"/>
    <property type="match status" value="1"/>
</dbReference>
<dbReference type="Pfam" id="PF00347">
    <property type="entry name" value="Ribosomal_L6"/>
    <property type="match status" value="2"/>
</dbReference>
<dbReference type="PIRSF" id="PIRSF002162">
    <property type="entry name" value="Ribosomal_L6"/>
    <property type="match status" value="1"/>
</dbReference>
<dbReference type="PRINTS" id="PR00059">
    <property type="entry name" value="RIBOSOMALL6"/>
</dbReference>
<dbReference type="SUPFAM" id="SSF56053">
    <property type="entry name" value="Ribosomal protein L6"/>
    <property type="match status" value="2"/>
</dbReference>
<proteinExistence type="inferred from homology"/>
<protein>
    <recommendedName>
        <fullName evidence="1">Large ribosomal subunit protein uL6</fullName>
    </recommendedName>
    <alternativeName>
        <fullName evidence="2">50S ribosomal protein L6</fullName>
    </alternativeName>
</protein>
<sequence length="184" mass="19974">MSRIGKLPVTLPEKVELSVSPSNLVTVKGPKGTLTQQVDVDIKVSVEDGKVVVARPTEQKRHKALHGLYRSLISNMVQGVSQGYKVELELVGVGYKATATNNILELSLGYSHGIFLKLPSEISASALTEKGKNPIVTLECIDKQLIGQVSAKIRSLRKIEPYKGKGVRFKGEVVRRKAGKTASK</sequence>
<organism>
    <name type="scientific">Cytophaga hutchinsonii (strain ATCC 33406 / DSM 1761 / CIP 103989 / NBRC 15051 / NCIMB 9469 / D465)</name>
    <dbReference type="NCBI Taxonomy" id="269798"/>
    <lineage>
        <taxon>Bacteria</taxon>
        <taxon>Pseudomonadati</taxon>
        <taxon>Bacteroidota</taxon>
        <taxon>Cytophagia</taxon>
        <taxon>Cytophagales</taxon>
        <taxon>Cytophagaceae</taxon>
        <taxon>Cytophaga</taxon>
    </lineage>
</organism>
<feature type="chain" id="PRO_0000265247" description="Large ribosomal subunit protein uL6">
    <location>
        <begin position="1"/>
        <end position="184"/>
    </location>
</feature>